<comment type="function">
    <text evidence="1">This protein is located at the 30S-50S ribosomal subunit interface and may play a role in the structure and function of the aminoacyl-tRNA binding site.</text>
</comment>
<comment type="similarity">
    <text evidence="1">Belongs to the bacterial ribosomal protein bL19 family.</text>
</comment>
<dbReference type="EMBL" id="AE017262">
    <property type="protein sequence ID" value="AAT04585.1"/>
    <property type="molecule type" value="Genomic_DNA"/>
</dbReference>
<dbReference type="RefSeq" id="WP_003728425.1">
    <property type="nucleotide sequence ID" value="NC_002973.6"/>
</dbReference>
<dbReference type="SMR" id="Q71YM9"/>
<dbReference type="GeneID" id="93239697"/>
<dbReference type="KEGG" id="lmf:LMOf2365_1814"/>
<dbReference type="HOGENOM" id="CLU_103507_2_1_9"/>
<dbReference type="GO" id="GO:0022625">
    <property type="term" value="C:cytosolic large ribosomal subunit"/>
    <property type="evidence" value="ECO:0007669"/>
    <property type="project" value="TreeGrafter"/>
</dbReference>
<dbReference type="GO" id="GO:0003735">
    <property type="term" value="F:structural constituent of ribosome"/>
    <property type="evidence" value="ECO:0007669"/>
    <property type="project" value="InterPro"/>
</dbReference>
<dbReference type="GO" id="GO:0006412">
    <property type="term" value="P:translation"/>
    <property type="evidence" value="ECO:0007669"/>
    <property type="project" value="UniProtKB-UniRule"/>
</dbReference>
<dbReference type="FunFam" id="2.30.30.790:FF:000001">
    <property type="entry name" value="50S ribosomal protein L19"/>
    <property type="match status" value="1"/>
</dbReference>
<dbReference type="Gene3D" id="2.30.30.790">
    <property type="match status" value="1"/>
</dbReference>
<dbReference type="HAMAP" id="MF_00402">
    <property type="entry name" value="Ribosomal_bL19"/>
    <property type="match status" value="1"/>
</dbReference>
<dbReference type="InterPro" id="IPR001857">
    <property type="entry name" value="Ribosomal_bL19"/>
</dbReference>
<dbReference type="InterPro" id="IPR018257">
    <property type="entry name" value="Ribosomal_bL19_CS"/>
</dbReference>
<dbReference type="InterPro" id="IPR038657">
    <property type="entry name" value="Ribosomal_bL19_sf"/>
</dbReference>
<dbReference type="InterPro" id="IPR008991">
    <property type="entry name" value="Translation_prot_SH3-like_sf"/>
</dbReference>
<dbReference type="NCBIfam" id="TIGR01024">
    <property type="entry name" value="rplS_bact"/>
    <property type="match status" value="1"/>
</dbReference>
<dbReference type="PANTHER" id="PTHR15680:SF9">
    <property type="entry name" value="LARGE RIBOSOMAL SUBUNIT PROTEIN BL19M"/>
    <property type="match status" value="1"/>
</dbReference>
<dbReference type="PANTHER" id="PTHR15680">
    <property type="entry name" value="RIBOSOMAL PROTEIN L19"/>
    <property type="match status" value="1"/>
</dbReference>
<dbReference type="Pfam" id="PF01245">
    <property type="entry name" value="Ribosomal_L19"/>
    <property type="match status" value="1"/>
</dbReference>
<dbReference type="PIRSF" id="PIRSF002191">
    <property type="entry name" value="Ribosomal_L19"/>
    <property type="match status" value="1"/>
</dbReference>
<dbReference type="PRINTS" id="PR00061">
    <property type="entry name" value="RIBOSOMALL19"/>
</dbReference>
<dbReference type="SUPFAM" id="SSF50104">
    <property type="entry name" value="Translation proteins SH3-like domain"/>
    <property type="match status" value="1"/>
</dbReference>
<dbReference type="PROSITE" id="PS01015">
    <property type="entry name" value="RIBOSOMAL_L19"/>
    <property type="match status" value="1"/>
</dbReference>
<feature type="chain" id="PRO_0000163478" description="Large ribosomal subunit protein bL19">
    <location>
        <begin position="1"/>
        <end position="114"/>
    </location>
</feature>
<sequence>MNKLIDEITKSQLNPDVPNFRPGDTVRVHAKVVEGTRERIQLFEGVVIKRRGAGISETFTVRKISNSVGVERTFPVHTPRIAKLEVIRRGKVRRAKLYYLRNLRGKAARIKEIR</sequence>
<protein>
    <recommendedName>
        <fullName evidence="1">Large ribosomal subunit protein bL19</fullName>
    </recommendedName>
    <alternativeName>
        <fullName evidence="2">50S ribosomal protein L19</fullName>
    </alternativeName>
</protein>
<reference key="1">
    <citation type="journal article" date="2004" name="Nucleic Acids Res.">
        <title>Whole genome comparisons of serotype 4b and 1/2a strains of the food-borne pathogen Listeria monocytogenes reveal new insights into the core genome components of this species.</title>
        <authorList>
            <person name="Nelson K.E."/>
            <person name="Fouts D.E."/>
            <person name="Mongodin E.F."/>
            <person name="Ravel J."/>
            <person name="DeBoy R.T."/>
            <person name="Kolonay J.F."/>
            <person name="Rasko D.A."/>
            <person name="Angiuoli S.V."/>
            <person name="Gill S.R."/>
            <person name="Paulsen I.T."/>
            <person name="Peterson J.D."/>
            <person name="White O."/>
            <person name="Nelson W.C."/>
            <person name="Nierman W.C."/>
            <person name="Beanan M.J."/>
            <person name="Brinkac L.M."/>
            <person name="Daugherty S.C."/>
            <person name="Dodson R.J."/>
            <person name="Durkin A.S."/>
            <person name="Madupu R."/>
            <person name="Haft D.H."/>
            <person name="Selengut J."/>
            <person name="Van Aken S.E."/>
            <person name="Khouri H.M."/>
            <person name="Fedorova N."/>
            <person name="Forberger H.A."/>
            <person name="Tran B."/>
            <person name="Kathariou S."/>
            <person name="Wonderling L.D."/>
            <person name="Uhlich G.A."/>
            <person name="Bayles D.O."/>
            <person name="Luchansky J.B."/>
            <person name="Fraser C.M."/>
        </authorList>
    </citation>
    <scope>NUCLEOTIDE SEQUENCE [LARGE SCALE GENOMIC DNA]</scope>
    <source>
        <strain>F2365</strain>
    </source>
</reference>
<organism>
    <name type="scientific">Listeria monocytogenes serotype 4b (strain F2365)</name>
    <dbReference type="NCBI Taxonomy" id="265669"/>
    <lineage>
        <taxon>Bacteria</taxon>
        <taxon>Bacillati</taxon>
        <taxon>Bacillota</taxon>
        <taxon>Bacilli</taxon>
        <taxon>Bacillales</taxon>
        <taxon>Listeriaceae</taxon>
        <taxon>Listeria</taxon>
    </lineage>
</organism>
<accession>Q71YM9</accession>
<proteinExistence type="inferred from homology"/>
<keyword id="KW-0687">Ribonucleoprotein</keyword>
<keyword id="KW-0689">Ribosomal protein</keyword>
<evidence type="ECO:0000255" key="1">
    <source>
        <dbReference type="HAMAP-Rule" id="MF_00402"/>
    </source>
</evidence>
<evidence type="ECO:0000305" key="2"/>
<gene>
    <name evidence="1" type="primary">rplS</name>
    <name type="ordered locus">LMOf2365_1814</name>
</gene>
<name>RL19_LISMF</name>